<reference key="1">
    <citation type="journal article" date="2003" name="Nature">
        <title>Genome divergence in two Prochlorococcus ecotypes reflects oceanic niche differentiation.</title>
        <authorList>
            <person name="Rocap G."/>
            <person name="Larimer F.W."/>
            <person name="Lamerdin J.E."/>
            <person name="Malfatti S."/>
            <person name="Chain P."/>
            <person name="Ahlgren N.A."/>
            <person name="Arellano A."/>
            <person name="Coleman M."/>
            <person name="Hauser L."/>
            <person name="Hess W.R."/>
            <person name="Johnson Z.I."/>
            <person name="Land M.L."/>
            <person name="Lindell D."/>
            <person name="Post A.F."/>
            <person name="Regala W."/>
            <person name="Shah M."/>
            <person name="Shaw S.L."/>
            <person name="Steglich C."/>
            <person name="Sullivan M.B."/>
            <person name="Ting C.S."/>
            <person name="Tolonen A."/>
            <person name="Webb E.A."/>
            <person name="Zinser E.R."/>
            <person name="Chisholm S.W."/>
        </authorList>
    </citation>
    <scope>NUCLEOTIDE SEQUENCE [LARGE SCALE GENOMIC DNA]</scope>
    <source>
        <strain>MIT 9313</strain>
    </source>
</reference>
<gene>
    <name evidence="1" type="primary">mqo</name>
    <name type="ordered locus">PMT_0255</name>
</gene>
<keyword id="KW-0274">FAD</keyword>
<keyword id="KW-0285">Flavoprotein</keyword>
<keyword id="KW-0560">Oxidoreductase</keyword>
<keyword id="KW-1185">Reference proteome</keyword>
<keyword id="KW-0816">Tricarboxylic acid cycle</keyword>
<sequence>MVVSDVAGSQSRYDAVLVGAGIMSATLAALLHELDPELSLLMVERLQAPGLESSAAENNAGTGHAANCELNYTPLQPDGSVATAKALAINTAFERSLEFWASLTEKGKLLPQQFLHLVPHISVVFGDADLAFLHQRFQQLSALPAFASMQWSTDVAELAEWMPLVMEGRANAESVAATCIKRGTDVDFGLLTGAYVKSLQASGALELSCGCEVVHLHRLGKHQWNLDLKHSSGSRSVQTPFVFLGAGGGALPLLQRSGIPEAAAYAGFPVSGQWLVCSEPGLTARHHAKVYGKAKVGAPPMSVPHLDSRWIDGCRSLLFGPYAGFSSKFLKQGSRLDLLRSVRRSNFRSMLEVGFKNFDLVTYLLSELQQSEKDRFETLKQFLPNAQLNDWKLSVAGQRVQIIKRTAEGGRLQMGTEVVSAQDGSLAALLGASPGASTAVTVMLEVLQRCWSERMASESWQQRLRKLLPSYGHDPNSEPLLLTQMRIRSNKLLNFT</sequence>
<dbReference type="EC" id="1.1.5.4" evidence="1"/>
<dbReference type="EMBL" id="BX548175">
    <property type="protein sequence ID" value="CAE20430.1"/>
    <property type="molecule type" value="Genomic_DNA"/>
</dbReference>
<dbReference type="RefSeq" id="WP_011129634.1">
    <property type="nucleotide sequence ID" value="NC_005071.1"/>
</dbReference>
<dbReference type="SMR" id="Q7V8S6"/>
<dbReference type="KEGG" id="pmt:PMT_0255"/>
<dbReference type="eggNOG" id="COG0579">
    <property type="taxonomic scope" value="Bacteria"/>
</dbReference>
<dbReference type="HOGENOM" id="CLU_028151_0_0_3"/>
<dbReference type="OrthoDB" id="9763983at2"/>
<dbReference type="UniPathway" id="UPA00223">
    <property type="reaction ID" value="UER01008"/>
</dbReference>
<dbReference type="Proteomes" id="UP000001423">
    <property type="component" value="Chromosome"/>
</dbReference>
<dbReference type="GO" id="GO:0047545">
    <property type="term" value="F:2-hydroxyglutarate dehydrogenase activity"/>
    <property type="evidence" value="ECO:0007669"/>
    <property type="project" value="TreeGrafter"/>
</dbReference>
<dbReference type="GO" id="GO:0008924">
    <property type="term" value="F:L-malate dehydrogenase (quinone) activity"/>
    <property type="evidence" value="ECO:0007669"/>
    <property type="project" value="UniProtKB-UniRule"/>
</dbReference>
<dbReference type="GO" id="GO:0006099">
    <property type="term" value="P:tricarboxylic acid cycle"/>
    <property type="evidence" value="ECO:0007669"/>
    <property type="project" value="UniProtKB-UniRule"/>
</dbReference>
<dbReference type="Gene3D" id="3.30.9.10">
    <property type="entry name" value="D-Amino Acid Oxidase, subunit A, domain 2"/>
    <property type="match status" value="1"/>
</dbReference>
<dbReference type="Gene3D" id="3.50.50.60">
    <property type="entry name" value="FAD/NAD(P)-binding domain"/>
    <property type="match status" value="1"/>
</dbReference>
<dbReference type="HAMAP" id="MF_00212">
    <property type="entry name" value="MQO"/>
    <property type="match status" value="1"/>
</dbReference>
<dbReference type="InterPro" id="IPR036188">
    <property type="entry name" value="FAD/NAD-bd_sf"/>
</dbReference>
<dbReference type="InterPro" id="IPR006231">
    <property type="entry name" value="MQO"/>
</dbReference>
<dbReference type="NCBIfam" id="TIGR01320">
    <property type="entry name" value="mal_quin_oxido"/>
    <property type="match status" value="1"/>
</dbReference>
<dbReference type="NCBIfam" id="NF003606">
    <property type="entry name" value="PRK05257.2-1"/>
    <property type="match status" value="1"/>
</dbReference>
<dbReference type="NCBIfam" id="NF003607">
    <property type="entry name" value="PRK05257.2-3"/>
    <property type="match status" value="1"/>
</dbReference>
<dbReference type="NCBIfam" id="NF003611">
    <property type="entry name" value="PRK05257.3-2"/>
    <property type="match status" value="1"/>
</dbReference>
<dbReference type="PANTHER" id="PTHR43104">
    <property type="entry name" value="L-2-HYDROXYGLUTARATE DEHYDROGENASE, MITOCHONDRIAL"/>
    <property type="match status" value="1"/>
</dbReference>
<dbReference type="PANTHER" id="PTHR43104:SF2">
    <property type="entry name" value="L-2-HYDROXYGLUTARATE DEHYDROGENASE, MITOCHONDRIAL"/>
    <property type="match status" value="1"/>
</dbReference>
<dbReference type="Pfam" id="PF06039">
    <property type="entry name" value="Mqo"/>
    <property type="match status" value="1"/>
</dbReference>
<dbReference type="SUPFAM" id="SSF51905">
    <property type="entry name" value="FAD/NAD(P)-binding domain"/>
    <property type="match status" value="1"/>
</dbReference>
<name>MQO_PROMM</name>
<organism>
    <name type="scientific">Prochlorococcus marinus (strain MIT 9313)</name>
    <dbReference type="NCBI Taxonomy" id="74547"/>
    <lineage>
        <taxon>Bacteria</taxon>
        <taxon>Bacillati</taxon>
        <taxon>Cyanobacteriota</taxon>
        <taxon>Cyanophyceae</taxon>
        <taxon>Synechococcales</taxon>
        <taxon>Prochlorococcaceae</taxon>
        <taxon>Prochlorococcus</taxon>
    </lineage>
</organism>
<protein>
    <recommendedName>
        <fullName evidence="1">Probable malate:quinone oxidoreductase</fullName>
        <ecNumber evidence="1">1.1.5.4</ecNumber>
    </recommendedName>
    <alternativeName>
        <fullName evidence="1">MQO</fullName>
    </alternativeName>
    <alternativeName>
        <fullName evidence="1">Malate dehydrogenase [quinone]</fullName>
    </alternativeName>
</protein>
<comment type="catalytic activity">
    <reaction evidence="1">
        <text>(S)-malate + a quinone = a quinol + oxaloacetate</text>
        <dbReference type="Rhea" id="RHEA:46012"/>
        <dbReference type="ChEBI" id="CHEBI:15589"/>
        <dbReference type="ChEBI" id="CHEBI:16452"/>
        <dbReference type="ChEBI" id="CHEBI:24646"/>
        <dbReference type="ChEBI" id="CHEBI:132124"/>
        <dbReference type="EC" id="1.1.5.4"/>
    </reaction>
</comment>
<comment type="cofactor">
    <cofactor evidence="1">
        <name>FAD</name>
        <dbReference type="ChEBI" id="CHEBI:57692"/>
    </cofactor>
</comment>
<comment type="pathway">
    <text evidence="1">Carbohydrate metabolism; tricarboxylic acid cycle; oxaloacetate from (S)-malate (quinone route): step 1/1.</text>
</comment>
<comment type="similarity">
    <text evidence="1">Belongs to the MQO family.</text>
</comment>
<accession>Q7V8S6</accession>
<proteinExistence type="inferred from homology"/>
<evidence type="ECO:0000255" key="1">
    <source>
        <dbReference type="HAMAP-Rule" id="MF_00212"/>
    </source>
</evidence>
<feature type="chain" id="PRO_0000128727" description="Probable malate:quinone oxidoreductase">
    <location>
        <begin position="1"/>
        <end position="496"/>
    </location>
</feature>